<sequence length="223" mass="23479">MKRTKSIRHASFRKNWSARHLTPVALAVATVFMLAGCEKSDETVSLYQNADDCSAANPGKSAECTTAYNNALKEAERTAPKYATREDCVAEFGEGQCQQAPAQAGMAPENQAQAQQSSGSFWMPLMAGYMMGRLMGGGAGFAQQPLFSSKNPASPAYGKYTDATGKNYGAAQPGRTMTVPKTAMAPKPATTTTVTRGGFGESVAKQSTMQRSATGTSSRSMGG</sequence>
<organism>
    <name type="scientific">Shigella sonnei (strain Ss046)</name>
    <dbReference type="NCBI Taxonomy" id="300269"/>
    <lineage>
        <taxon>Bacteria</taxon>
        <taxon>Pseudomonadati</taxon>
        <taxon>Pseudomonadota</taxon>
        <taxon>Gammaproteobacteria</taxon>
        <taxon>Enterobacterales</taxon>
        <taxon>Enterobacteriaceae</taxon>
        <taxon>Shigella</taxon>
    </lineage>
</organism>
<keyword id="KW-1185">Reference proteome</keyword>
<comment type="similarity">
    <text evidence="1">Belongs to the UPF0441 family.</text>
</comment>
<comment type="sequence caution" evidence="3">
    <conflict type="erroneous initiation">
        <sequence resource="EMBL-CDS" id="AAZ89758"/>
    </conflict>
</comment>
<proteinExistence type="inferred from homology"/>
<evidence type="ECO:0000255" key="1">
    <source>
        <dbReference type="HAMAP-Rule" id="MF_01188"/>
    </source>
</evidence>
<evidence type="ECO:0000256" key="2">
    <source>
        <dbReference type="SAM" id="MobiDB-lite"/>
    </source>
</evidence>
<evidence type="ECO:0000305" key="3"/>
<accession>Q3YXK4</accession>
<reference key="1">
    <citation type="journal article" date="2005" name="Nucleic Acids Res.">
        <title>Genome dynamics and diversity of Shigella species, the etiologic agents of bacillary dysentery.</title>
        <authorList>
            <person name="Yang F."/>
            <person name="Yang J."/>
            <person name="Zhang X."/>
            <person name="Chen L."/>
            <person name="Jiang Y."/>
            <person name="Yan Y."/>
            <person name="Tang X."/>
            <person name="Wang J."/>
            <person name="Xiong Z."/>
            <person name="Dong J."/>
            <person name="Xue Y."/>
            <person name="Zhu Y."/>
            <person name="Xu X."/>
            <person name="Sun L."/>
            <person name="Chen S."/>
            <person name="Nie H."/>
            <person name="Peng J."/>
            <person name="Xu J."/>
            <person name="Wang Y."/>
            <person name="Yuan Z."/>
            <person name="Wen Y."/>
            <person name="Yao Z."/>
            <person name="Shen Y."/>
            <person name="Qiang B."/>
            <person name="Hou Y."/>
            <person name="Yu J."/>
            <person name="Jin Q."/>
        </authorList>
    </citation>
    <scope>NUCLEOTIDE SEQUENCE [LARGE SCALE GENOMIC DNA]</scope>
    <source>
        <strain>Ss046</strain>
    </source>
</reference>
<name>YGIB_SHISS</name>
<feature type="chain" id="PRO_0000293646" description="UPF0441 protein YgiB">
    <location>
        <begin position="1"/>
        <end position="223"/>
    </location>
</feature>
<feature type="region of interest" description="Disordered" evidence="2">
    <location>
        <begin position="178"/>
        <end position="223"/>
    </location>
</feature>
<feature type="compositionally biased region" description="Low complexity" evidence="2">
    <location>
        <begin position="178"/>
        <end position="195"/>
    </location>
</feature>
<feature type="compositionally biased region" description="Polar residues" evidence="2">
    <location>
        <begin position="204"/>
        <end position="223"/>
    </location>
</feature>
<dbReference type="EMBL" id="CP000038">
    <property type="protein sequence ID" value="AAZ89758.1"/>
    <property type="status" value="ALT_INIT"/>
    <property type="molecule type" value="Genomic_DNA"/>
</dbReference>
<dbReference type="RefSeq" id="WP_000831543.1">
    <property type="nucleotide sequence ID" value="NC_007384.1"/>
</dbReference>
<dbReference type="SMR" id="Q3YXK4"/>
<dbReference type="KEGG" id="ssn:SSON_3174"/>
<dbReference type="HOGENOM" id="CLU_095624_0_0_6"/>
<dbReference type="Proteomes" id="UP000002529">
    <property type="component" value="Chromosome"/>
</dbReference>
<dbReference type="HAMAP" id="MF_01188">
    <property type="entry name" value="UPF0441"/>
    <property type="match status" value="1"/>
</dbReference>
<dbReference type="InterPro" id="IPR009576">
    <property type="entry name" value="Biofilm_formation_YgiB"/>
</dbReference>
<dbReference type="NCBIfam" id="NF008655">
    <property type="entry name" value="PRK11653.1"/>
    <property type="match status" value="1"/>
</dbReference>
<dbReference type="Pfam" id="PF06693">
    <property type="entry name" value="DUF1190"/>
    <property type="match status" value="1"/>
</dbReference>
<protein>
    <recommendedName>
        <fullName evidence="1">UPF0441 protein YgiB</fullName>
    </recommendedName>
</protein>
<gene>
    <name evidence="1" type="primary">ygiB</name>
    <name type="ordered locus">SSON_3174</name>
</gene>